<sequence>MKIDVHHHFYPQAFREALEAAGGDPSGWYIPPWTLELDQEINATLNVTTTILSVTAPGPVIAKDPAAAASLARECNRSAAAIRDAAPAQYGFFASVPSLFDTALALEEIRYALDELHADGVTLFTRYGQGANYLGHEAFAPIWAELSRRQAVVFIHPTHPQDTALINRALPQPMFDYPHETGRTAMDLLTSGRLRQHRGCRVILSHAGGTLPYLIHRAATMLPCMPPDRNIGLSRDEILDTAREVFYFDTAISANEVTLSALARFAKPGHILFGSDFPNAPRDAIVRFTRFVEEEAAALPDGVTVEALKENALQLFPRLKRAEANGVPKI</sequence>
<comment type="function">
    <text evidence="1 4 7">6-methylsalicylic acid decarboxylase; part of the gene cluster that mediates the biosynthesis of aculins (PubMed:26374386). The pathway begins with the synthesis of 6-methylsalicylic acid by the polyketide synthase (PKS) acuA via condensation of acetate and malonate units (PubMed:26374386). The 6-methylsalicylic acid decarboxylase acuB then catalyzes the decarboxylation of 6-methylsalicylic acid to yield m-cresol (also known as 3-methylphenol) (Probable). These first reactions occur in the cytosol (By similarity). The intermediate m-cresol is then transported into the endoplasmic reticulum where the cytochrome P450 monooxygenase acuC converts it to m-hydroxybenzyl alcohol, which is further converted to gentisyl alcohol by the cytochrome P450 monooxygenase acuD (Probable). Gentisyl alcohol is further oxidized by the oxidoreductase acuE that probably catalyzes hydroxylation of the aromatic ring (Probable). The aromatic system might then be opened by oxidation through a Baeyer-Villiger type of oxidation, which could be catalyzed by acuF, with the carboxylic acid at C-1 subsequently reduced to an aldehyde by acuG (Probable). Subsequently, a hemiacetal is formed, before the dehydrogenase acuH would reduce the double bond between C-4 and C-6 (Probable). Finally, keto-enol tautomerism results in formation of aculinic acid, which exists as two diastereomers (both R/S configurations at C-1) by non-enzymatic hemiacetal formation (Probable). The carboxypeptidase acuI could be involved in the linking of aculinic acid to an aculene A moiety produced by the aculene biosynthesis cluster and which leads to the production of aculin A (Probable). AcuI may also be involved in the attachment of proline to aculinic acid to form epi-aculins A and B (Probable).</text>
</comment>
<comment type="catalytic activity">
    <reaction evidence="7">
        <text>6-methylsalicylate + H(+) = 3-methylphenol + CO2</text>
        <dbReference type="Rhea" id="RHEA:23112"/>
        <dbReference type="ChEBI" id="CHEBI:15378"/>
        <dbReference type="ChEBI" id="CHEBI:16526"/>
        <dbReference type="ChEBI" id="CHEBI:17231"/>
        <dbReference type="ChEBI" id="CHEBI:36658"/>
        <dbReference type="EC" id="4.1.1.52"/>
    </reaction>
    <physiologicalReaction direction="left-to-right" evidence="7">
        <dbReference type="Rhea" id="RHEA:23113"/>
    </physiologicalReaction>
</comment>
<comment type="pathway">
    <text evidence="7">Secondary metabolite biosynthesis.</text>
</comment>
<comment type="subunit">
    <text evidence="3">Monomer.</text>
</comment>
<comment type="subcellular location">
    <subcellularLocation>
        <location evidence="2">Cytoplasm</location>
        <location evidence="2">Cytosol</location>
    </subcellularLocation>
</comment>
<comment type="similarity">
    <text evidence="6">Belongs to the metallo-dependent hydrolases superfamily. ACMSD family.</text>
</comment>
<evidence type="ECO:0000250" key="1">
    <source>
        <dbReference type="UniProtKB" id="A0A075TRC0"/>
    </source>
</evidence>
<evidence type="ECO:0000250" key="2">
    <source>
        <dbReference type="UniProtKB" id="A0A075TXZ1"/>
    </source>
</evidence>
<evidence type="ECO:0000250" key="3">
    <source>
        <dbReference type="UniProtKB" id="Q8TDX5"/>
    </source>
</evidence>
<evidence type="ECO:0000269" key="4">
    <source>
    </source>
</evidence>
<evidence type="ECO:0000303" key="5">
    <source>
    </source>
</evidence>
<evidence type="ECO:0000305" key="6"/>
<evidence type="ECO:0000305" key="7">
    <source>
    </source>
</evidence>
<dbReference type="EC" id="4.1.1.52" evidence="7"/>
<dbReference type="EMBL" id="KV878982">
    <property type="protein sequence ID" value="OJJ97581.1"/>
    <property type="molecule type" value="Genomic_DNA"/>
</dbReference>
<dbReference type="RefSeq" id="XP_020053921.1">
    <property type="nucleotide sequence ID" value="XM_020201649.1"/>
</dbReference>
<dbReference type="SMR" id="A0A1L9WN60"/>
<dbReference type="STRING" id="690307.A0A1L9WN60"/>
<dbReference type="GeneID" id="30975463"/>
<dbReference type="VEuPathDB" id="FungiDB:ASPACDRAFT_45672"/>
<dbReference type="OMA" id="DVHHHVY"/>
<dbReference type="OrthoDB" id="2832284at2759"/>
<dbReference type="Proteomes" id="UP000184546">
    <property type="component" value="Unassembled WGS sequence"/>
</dbReference>
<dbReference type="GO" id="GO:0005829">
    <property type="term" value="C:cytosol"/>
    <property type="evidence" value="ECO:0007669"/>
    <property type="project" value="UniProtKB-SubCell"/>
</dbReference>
<dbReference type="GO" id="GO:0047596">
    <property type="term" value="F:6-methylsalicylate decarboxylase activity"/>
    <property type="evidence" value="ECO:0007669"/>
    <property type="project" value="UniProtKB-EC"/>
</dbReference>
<dbReference type="GO" id="GO:0016787">
    <property type="term" value="F:hydrolase activity"/>
    <property type="evidence" value="ECO:0007669"/>
    <property type="project" value="UniProtKB-KW"/>
</dbReference>
<dbReference type="GO" id="GO:0046872">
    <property type="term" value="F:metal ion binding"/>
    <property type="evidence" value="ECO:0007669"/>
    <property type="project" value="UniProtKB-KW"/>
</dbReference>
<dbReference type="GO" id="GO:0019748">
    <property type="term" value="P:secondary metabolic process"/>
    <property type="evidence" value="ECO:0007669"/>
    <property type="project" value="TreeGrafter"/>
</dbReference>
<dbReference type="Gene3D" id="3.20.20.140">
    <property type="entry name" value="Metal-dependent hydrolases"/>
    <property type="match status" value="1"/>
</dbReference>
<dbReference type="InterPro" id="IPR032465">
    <property type="entry name" value="ACMSD"/>
</dbReference>
<dbReference type="InterPro" id="IPR006680">
    <property type="entry name" value="Amidohydro-rel"/>
</dbReference>
<dbReference type="InterPro" id="IPR032466">
    <property type="entry name" value="Metal_Hydrolase"/>
</dbReference>
<dbReference type="PANTHER" id="PTHR21240">
    <property type="entry name" value="2-AMINO-3-CARBOXYLMUCONATE-6-SEMIALDEHYDE DECARBOXYLASE"/>
    <property type="match status" value="1"/>
</dbReference>
<dbReference type="PANTHER" id="PTHR21240:SF29">
    <property type="entry name" value="AMIDOHYDROLASE-RELATED DOMAIN-CONTAINING PROTEIN"/>
    <property type="match status" value="1"/>
</dbReference>
<dbReference type="Pfam" id="PF04909">
    <property type="entry name" value="Amidohydro_2"/>
    <property type="match status" value="1"/>
</dbReference>
<dbReference type="SUPFAM" id="SSF51556">
    <property type="entry name" value="Metallo-dependent hydrolases"/>
    <property type="match status" value="1"/>
</dbReference>
<organism>
    <name type="scientific">Aspergillus aculeatus (strain ATCC 16872 / CBS 172.66 / WB 5094)</name>
    <dbReference type="NCBI Taxonomy" id="690307"/>
    <lineage>
        <taxon>Eukaryota</taxon>
        <taxon>Fungi</taxon>
        <taxon>Dikarya</taxon>
        <taxon>Ascomycota</taxon>
        <taxon>Pezizomycotina</taxon>
        <taxon>Eurotiomycetes</taxon>
        <taxon>Eurotiomycetidae</taxon>
        <taxon>Eurotiales</taxon>
        <taxon>Aspergillaceae</taxon>
        <taxon>Aspergillus</taxon>
        <taxon>Aspergillus subgen. Circumdati</taxon>
    </lineage>
</organism>
<proteinExistence type="inferred from homology"/>
<reference key="1">
    <citation type="journal article" date="2017" name="Genome Biol.">
        <title>Comparative genomics reveals high biological diversity and specific adaptations in the industrially and medically important fungal genus Aspergillus.</title>
        <authorList>
            <person name="de Vries R.P."/>
            <person name="Riley R."/>
            <person name="Wiebenga A."/>
            <person name="Aguilar-Osorio G."/>
            <person name="Amillis S."/>
            <person name="Uchima C.A."/>
            <person name="Anderluh G."/>
            <person name="Asadollahi M."/>
            <person name="Askin M."/>
            <person name="Barry K."/>
            <person name="Battaglia E."/>
            <person name="Bayram O."/>
            <person name="Benocci T."/>
            <person name="Braus-Stromeyer S.A."/>
            <person name="Caldana C."/>
            <person name="Canovas D."/>
            <person name="Cerqueira G.C."/>
            <person name="Chen F."/>
            <person name="Chen W."/>
            <person name="Choi C."/>
            <person name="Clum A."/>
            <person name="Dos Santos R.A."/>
            <person name="Damasio A.R."/>
            <person name="Diallinas G."/>
            <person name="Emri T."/>
            <person name="Fekete E."/>
            <person name="Flipphi M."/>
            <person name="Freyberg S."/>
            <person name="Gallo A."/>
            <person name="Gournas C."/>
            <person name="Habgood R."/>
            <person name="Hainaut M."/>
            <person name="Harispe M.L."/>
            <person name="Henrissat B."/>
            <person name="Hilden K.S."/>
            <person name="Hope R."/>
            <person name="Hossain A."/>
            <person name="Karabika E."/>
            <person name="Karaffa L."/>
            <person name="Karanyi Z."/>
            <person name="Krasevec N."/>
            <person name="Kuo A."/>
            <person name="Kusch H."/>
            <person name="LaButti K."/>
            <person name="Lagendijk E.L."/>
            <person name="Lapidus A."/>
            <person name="Levasseur A."/>
            <person name="Lindquist E."/>
            <person name="Lipzen A."/>
            <person name="Logrieco A.F."/>
            <person name="MacCabe A."/>
            <person name="Maekelae M.R."/>
            <person name="Malavazi I."/>
            <person name="Melin P."/>
            <person name="Meyer V."/>
            <person name="Mielnichuk N."/>
            <person name="Miskei M."/>
            <person name="Molnar A.P."/>
            <person name="Mule G."/>
            <person name="Ngan C.Y."/>
            <person name="Orejas M."/>
            <person name="Orosz E."/>
            <person name="Ouedraogo J.P."/>
            <person name="Overkamp K.M."/>
            <person name="Park H.-S."/>
            <person name="Perrone G."/>
            <person name="Piumi F."/>
            <person name="Punt P.J."/>
            <person name="Ram A.F."/>
            <person name="Ramon A."/>
            <person name="Rauscher S."/>
            <person name="Record E."/>
            <person name="Riano-Pachon D.M."/>
            <person name="Robert V."/>
            <person name="Roehrig J."/>
            <person name="Ruller R."/>
            <person name="Salamov A."/>
            <person name="Salih N.S."/>
            <person name="Samson R.A."/>
            <person name="Sandor E."/>
            <person name="Sanguinetti M."/>
            <person name="Schuetze T."/>
            <person name="Sepcic K."/>
            <person name="Shelest E."/>
            <person name="Sherlock G."/>
            <person name="Sophianopoulou V."/>
            <person name="Squina F.M."/>
            <person name="Sun H."/>
            <person name="Susca A."/>
            <person name="Todd R.B."/>
            <person name="Tsang A."/>
            <person name="Unkles S.E."/>
            <person name="van de Wiele N."/>
            <person name="van Rossen-Uffink D."/>
            <person name="Oliveira J.V."/>
            <person name="Vesth T.C."/>
            <person name="Visser J."/>
            <person name="Yu J.-H."/>
            <person name="Zhou M."/>
            <person name="Andersen M.R."/>
            <person name="Archer D.B."/>
            <person name="Baker S.E."/>
            <person name="Benoit I."/>
            <person name="Brakhage A.A."/>
            <person name="Braus G.H."/>
            <person name="Fischer R."/>
            <person name="Frisvad J.C."/>
            <person name="Goldman G.H."/>
            <person name="Houbraken J."/>
            <person name="Oakley B."/>
            <person name="Pocsi I."/>
            <person name="Scazzocchio C."/>
            <person name="Seiboth B."/>
            <person name="vanKuyk P.A."/>
            <person name="Wortman J."/>
            <person name="Dyer P.S."/>
            <person name="Grigoriev I.V."/>
        </authorList>
    </citation>
    <scope>NUCLEOTIDE SEQUENCE [LARGE SCALE GENOMIC DNA]</scope>
    <source>
        <strain>ATCC 16872 / CBS 172.66 / WB 5094</strain>
    </source>
</reference>
<reference key="2">
    <citation type="journal article" date="2015" name="ChemBioChem">
        <title>Investigation of a 6-MSA Synthase Gene Cluster in Aspergillus aculeatus Reveals 6-MSA-derived Aculinic Acid, Aculins A-B and Epi-Aculin A.</title>
        <authorList>
            <person name="Petersen L.M."/>
            <person name="Holm D.K."/>
            <person name="Gotfredsen C.H."/>
            <person name="Mortensen U.H."/>
            <person name="Larsen T.O."/>
        </authorList>
    </citation>
    <scope>FUNCTION</scope>
    <scope>PATHWAY</scope>
</reference>
<protein>
    <recommendedName>
        <fullName evidence="5">6-methylsalicylic acid decarboxylase acuB</fullName>
        <ecNumber evidence="7">4.1.1.52</ecNumber>
    </recommendedName>
    <alternativeName>
        <fullName evidence="5">Aculin biosynthesis cluster protein B</fullName>
    </alternativeName>
</protein>
<accession>A0A1L9WN60</accession>
<name>ACUB_ASPA1</name>
<gene>
    <name evidence="5" type="primary">acuB</name>
    <name type="ORF">ASPACDRAFT_45672</name>
</gene>
<keyword id="KW-0963">Cytoplasm</keyword>
<keyword id="KW-0210">Decarboxylase</keyword>
<keyword id="KW-0378">Hydrolase</keyword>
<keyword id="KW-0456">Lyase</keyword>
<keyword id="KW-0479">Metal-binding</keyword>
<keyword id="KW-1185">Reference proteome</keyword>
<keyword id="KW-0862">Zinc</keyword>
<feature type="chain" id="PRO_0000450414" description="6-methylsalicylic acid decarboxylase acuB">
    <location>
        <begin position="1"/>
        <end position="330"/>
    </location>
</feature>
<feature type="binding site" evidence="3">
    <location>
        <position position="6"/>
    </location>
    <ligand>
        <name>Zn(2+)</name>
        <dbReference type="ChEBI" id="CHEBI:29105"/>
    </ligand>
</feature>
<feature type="binding site" evidence="3">
    <location>
        <position position="8"/>
    </location>
    <ligand>
        <name>Zn(2+)</name>
        <dbReference type="ChEBI" id="CHEBI:29105"/>
    </ligand>
</feature>
<feature type="binding site" evidence="3">
    <location>
        <position position="156"/>
    </location>
    <ligand>
        <name>Zn(2+)</name>
        <dbReference type="ChEBI" id="CHEBI:29105"/>
    </ligand>
</feature>
<feature type="binding site" evidence="3">
    <location>
        <position position="276"/>
    </location>
    <ligand>
        <name>Zn(2+)</name>
        <dbReference type="ChEBI" id="CHEBI:29105"/>
    </ligand>
</feature>